<sequence>MRKRDRHQLIKKMITEEKLSTQKEIQDRLEAHNVCVTQTTLSRDLREIGLTKVKKNDMVYYVLVNETEKIDLVEFLSHHLEGVARAEFTLVLHTKLGEASVLANIVDVNKDEWILGTVAGANTLLVICRDQHVAKLMEDRLLDLMKDK</sequence>
<comment type="function">
    <text evidence="1">Regulates arginine biosynthesis genes.</text>
</comment>
<comment type="pathway">
    <text>Amino-acid biosynthesis; L-arginine biosynthesis [regulation].</text>
</comment>
<comment type="subcellular location">
    <subcellularLocation>
        <location evidence="1">Cytoplasm</location>
    </subcellularLocation>
</comment>
<comment type="similarity">
    <text evidence="2">Belongs to the ArgR family.</text>
</comment>
<gene>
    <name type="primary">argR</name>
    <name type="ordered locus">SP_2077</name>
</gene>
<keyword id="KW-0028">Amino-acid biosynthesis</keyword>
<keyword id="KW-0055">Arginine biosynthesis</keyword>
<keyword id="KW-0963">Cytoplasm</keyword>
<keyword id="KW-0238">DNA-binding</keyword>
<keyword id="KW-1185">Reference proteome</keyword>
<keyword id="KW-0678">Repressor</keyword>
<keyword id="KW-0804">Transcription</keyword>
<keyword id="KW-0805">Transcription regulation</keyword>
<dbReference type="EMBL" id="M18729">
    <property type="protein sequence ID" value="AAA88596.1"/>
    <property type="molecule type" value="Genomic_DNA"/>
</dbReference>
<dbReference type="EMBL" id="AE005672">
    <property type="protein sequence ID" value="AAK76138.1"/>
    <property type="molecule type" value="Genomic_DNA"/>
</dbReference>
<dbReference type="PIR" id="A95243">
    <property type="entry name" value="A95243"/>
</dbReference>
<dbReference type="PIR" id="B28667">
    <property type="entry name" value="B28667"/>
</dbReference>
<dbReference type="RefSeq" id="WP_001231472.1">
    <property type="nucleotide sequence ID" value="NZ_CP155539.1"/>
</dbReference>
<dbReference type="SMR" id="P0A2Y2"/>
<dbReference type="PaxDb" id="170187-SP_2077"/>
<dbReference type="EnsemblBacteria" id="AAK76138">
    <property type="protein sequence ID" value="AAK76138"/>
    <property type="gene ID" value="SP_2077"/>
</dbReference>
<dbReference type="GeneID" id="45652687"/>
<dbReference type="KEGG" id="spn:SP_2077"/>
<dbReference type="eggNOG" id="COG1438">
    <property type="taxonomic scope" value="Bacteria"/>
</dbReference>
<dbReference type="PhylomeDB" id="P0A2Y2"/>
<dbReference type="BioCyc" id="SPNE170187:G1FZB-2163-MONOMER"/>
<dbReference type="UniPathway" id="UPA00068"/>
<dbReference type="Proteomes" id="UP000000585">
    <property type="component" value="Chromosome"/>
</dbReference>
<dbReference type="GO" id="GO:0005737">
    <property type="term" value="C:cytoplasm"/>
    <property type="evidence" value="ECO:0007669"/>
    <property type="project" value="UniProtKB-SubCell"/>
</dbReference>
<dbReference type="GO" id="GO:0034618">
    <property type="term" value="F:arginine binding"/>
    <property type="evidence" value="ECO:0007669"/>
    <property type="project" value="InterPro"/>
</dbReference>
<dbReference type="GO" id="GO:0003677">
    <property type="term" value="F:DNA binding"/>
    <property type="evidence" value="ECO:0007669"/>
    <property type="project" value="UniProtKB-KW"/>
</dbReference>
<dbReference type="GO" id="GO:0003700">
    <property type="term" value="F:DNA-binding transcription factor activity"/>
    <property type="evidence" value="ECO:0007669"/>
    <property type="project" value="UniProtKB-UniRule"/>
</dbReference>
<dbReference type="GO" id="GO:0006526">
    <property type="term" value="P:L-arginine biosynthetic process"/>
    <property type="evidence" value="ECO:0007669"/>
    <property type="project" value="UniProtKB-UniPathway"/>
</dbReference>
<dbReference type="GO" id="GO:0051259">
    <property type="term" value="P:protein complex oligomerization"/>
    <property type="evidence" value="ECO:0007669"/>
    <property type="project" value="InterPro"/>
</dbReference>
<dbReference type="GO" id="GO:1900079">
    <property type="term" value="P:regulation of arginine biosynthetic process"/>
    <property type="evidence" value="ECO:0007669"/>
    <property type="project" value="UniProtKB-UniRule"/>
</dbReference>
<dbReference type="Gene3D" id="3.30.1360.40">
    <property type="match status" value="1"/>
</dbReference>
<dbReference type="Gene3D" id="1.10.10.10">
    <property type="entry name" value="Winged helix-like DNA-binding domain superfamily/Winged helix DNA-binding domain"/>
    <property type="match status" value="1"/>
</dbReference>
<dbReference type="HAMAP" id="MF_00173">
    <property type="entry name" value="Arg_repressor"/>
    <property type="match status" value="1"/>
</dbReference>
<dbReference type="InterPro" id="IPR001669">
    <property type="entry name" value="Arg_repress"/>
</dbReference>
<dbReference type="InterPro" id="IPR020899">
    <property type="entry name" value="Arg_repress_C"/>
</dbReference>
<dbReference type="InterPro" id="IPR036251">
    <property type="entry name" value="Arg_repress_C_sf"/>
</dbReference>
<dbReference type="InterPro" id="IPR020900">
    <property type="entry name" value="Arg_repress_DNA-bd"/>
</dbReference>
<dbReference type="InterPro" id="IPR036388">
    <property type="entry name" value="WH-like_DNA-bd_sf"/>
</dbReference>
<dbReference type="InterPro" id="IPR036390">
    <property type="entry name" value="WH_DNA-bd_sf"/>
</dbReference>
<dbReference type="NCBIfam" id="TIGR01529">
    <property type="entry name" value="argR_whole"/>
    <property type="match status" value="1"/>
</dbReference>
<dbReference type="PANTHER" id="PTHR34471">
    <property type="entry name" value="ARGININE REPRESSOR"/>
    <property type="match status" value="1"/>
</dbReference>
<dbReference type="PANTHER" id="PTHR34471:SF1">
    <property type="entry name" value="ARGININE REPRESSOR"/>
    <property type="match status" value="1"/>
</dbReference>
<dbReference type="Pfam" id="PF01316">
    <property type="entry name" value="Arg_repressor"/>
    <property type="match status" value="1"/>
</dbReference>
<dbReference type="Pfam" id="PF02863">
    <property type="entry name" value="Arg_repressor_C"/>
    <property type="match status" value="1"/>
</dbReference>
<dbReference type="PRINTS" id="PR01467">
    <property type="entry name" value="ARGREPRESSOR"/>
</dbReference>
<dbReference type="SUPFAM" id="SSF55252">
    <property type="entry name" value="C-terminal domain of arginine repressor"/>
    <property type="match status" value="1"/>
</dbReference>
<dbReference type="SUPFAM" id="SSF46785">
    <property type="entry name" value="Winged helix' DNA-binding domain"/>
    <property type="match status" value="1"/>
</dbReference>
<organism>
    <name type="scientific">Streptococcus pneumoniae serotype 4 (strain ATCC BAA-334 / TIGR4)</name>
    <dbReference type="NCBI Taxonomy" id="170187"/>
    <lineage>
        <taxon>Bacteria</taxon>
        <taxon>Bacillati</taxon>
        <taxon>Bacillota</taxon>
        <taxon>Bacilli</taxon>
        <taxon>Lactobacillales</taxon>
        <taxon>Streptococcaceae</taxon>
        <taxon>Streptococcus</taxon>
    </lineage>
</organism>
<feature type="chain" id="PRO_0000205126" description="Arginine repressor">
    <location>
        <begin position="1"/>
        <end position="148"/>
    </location>
</feature>
<proteinExistence type="inferred from homology"/>
<evidence type="ECO:0000250" key="1"/>
<evidence type="ECO:0000305" key="2"/>
<protein>
    <recommendedName>
        <fullName>Arginine repressor</fullName>
    </recommendedName>
</protein>
<reference key="1">
    <citation type="journal article" date="1988" name="J. Bacteriol.">
        <title>Nucleotide sequence of the hexA gene for DNA mismatch repair in Streptococcus pneumoniae and homology of hexA to mutS of Escherichia coli and Salmonella typhimurium.</title>
        <authorList>
            <person name="Priebe S.D."/>
            <person name="Hadi S.M."/>
            <person name="Greenberg B."/>
            <person name="Lacks S.A."/>
        </authorList>
    </citation>
    <scope>NUCLEOTIDE SEQUENCE [GENOMIC DNA]</scope>
    <source>
        <strain>175</strain>
    </source>
</reference>
<reference key="2">
    <citation type="journal article" date="2001" name="Science">
        <title>Complete genome sequence of a virulent isolate of Streptococcus pneumoniae.</title>
        <authorList>
            <person name="Tettelin H."/>
            <person name="Nelson K.E."/>
            <person name="Paulsen I.T."/>
            <person name="Eisen J.A."/>
            <person name="Read T.D."/>
            <person name="Peterson S.N."/>
            <person name="Heidelberg J.F."/>
            <person name="DeBoy R.T."/>
            <person name="Haft D.H."/>
            <person name="Dodson R.J."/>
            <person name="Durkin A.S."/>
            <person name="Gwinn M.L."/>
            <person name="Kolonay J.F."/>
            <person name="Nelson W.C."/>
            <person name="Peterson J.D."/>
            <person name="Umayam L.A."/>
            <person name="White O."/>
            <person name="Salzberg S.L."/>
            <person name="Lewis M.R."/>
            <person name="Radune D."/>
            <person name="Holtzapple E.K."/>
            <person name="Khouri H.M."/>
            <person name="Wolf A.M."/>
            <person name="Utterback T.R."/>
            <person name="Hansen C.L."/>
            <person name="McDonald L.A."/>
            <person name="Feldblyum T.V."/>
            <person name="Angiuoli S.V."/>
            <person name="Dickinson T."/>
            <person name="Hickey E.K."/>
            <person name="Holt I.E."/>
            <person name="Loftus B.J."/>
            <person name="Yang F."/>
            <person name="Smith H.O."/>
            <person name="Venter J.C."/>
            <person name="Dougherty B.A."/>
            <person name="Morrison D.A."/>
            <person name="Hollingshead S.K."/>
            <person name="Fraser C.M."/>
        </authorList>
    </citation>
    <scope>NUCLEOTIDE SEQUENCE [LARGE SCALE GENOMIC DNA]</scope>
    <source>
        <strain>ATCC BAA-334 / TIGR4</strain>
    </source>
</reference>
<name>ARGR_STRPN</name>
<accession>P0A2Y2</accession>
<accession>Q54870</accession>